<accession>Q3YVC2</accession>
<comment type="function">
    <text evidence="1">Catalyzes the final step of fatty acid oxidation in which acetyl-CoA is released and the CoA ester of a fatty acid two carbons shorter is formed.</text>
</comment>
<comment type="catalytic activity">
    <reaction evidence="1">
        <text>an acyl-CoA + acetyl-CoA = a 3-oxoacyl-CoA + CoA</text>
        <dbReference type="Rhea" id="RHEA:21564"/>
        <dbReference type="ChEBI" id="CHEBI:57287"/>
        <dbReference type="ChEBI" id="CHEBI:57288"/>
        <dbReference type="ChEBI" id="CHEBI:58342"/>
        <dbReference type="ChEBI" id="CHEBI:90726"/>
        <dbReference type="EC" id="2.3.1.16"/>
    </reaction>
</comment>
<comment type="pathway">
    <text evidence="1">Lipid metabolism; fatty acid beta-oxidation.</text>
</comment>
<comment type="subunit">
    <text evidence="1">Heterotetramer of two alpha chains (FadB) and two beta chains (FadA).</text>
</comment>
<comment type="subcellular location">
    <subcellularLocation>
        <location evidence="1">Cytoplasm</location>
    </subcellularLocation>
</comment>
<comment type="similarity">
    <text evidence="1">Belongs to the thiolase-like superfamily. Thiolase family.</text>
</comment>
<name>FADA_SHISS</name>
<protein>
    <recommendedName>
        <fullName evidence="1">3-ketoacyl-CoA thiolase</fullName>
        <ecNumber evidence="1">2.3.1.16</ecNumber>
    </recommendedName>
    <alternativeName>
        <fullName evidence="1">Acetyl-CoA acyltransferase</fullName>
    </alternativeName>
    <alternativeName>
        <fullName evidence="1">Beta-ketothiolase</fullName>
    </alternativeName>
    <alternativeName>
        <fullName evidence="1">Fatty acid oxidation complex subunit beta</fullName>
    </alternativeName>
</protein>
<evidence type="ECO:0000255" key="1">
    <source>
        <dbReference type="HAMAP-Rule" id="MF_01620"/>
    </source>
</evidence>
<organism>
    <name type="scientific">Shigella sonnei (strain Ss046)</name>
    <dbReference type="NCBI Taxonomy" id="300269"/>
    <lineage>
        <taxon>Bacteria</taxon>
        <taxon>Pseudomonadati</taxon>
        <taxon>Pseudomonadota</taxon>
        <taxon>Gammaproteobacteria</taxon>
        <taxon>Enterobacterales</taxon>
        <taxon>Enterobacteriaceae</taxon>
        <taxon>Shigella</taxon>
    </lineage>
</organism>
<proteinExistence type="inferred from homology"/>
<gene>
    <name evidence="1" type="primary">fadA</name>
    <name type="ordered locus">SSON_4018</name>
</gene>
<dbReference type="EC" id="2.3.1.16" evidence="1"/>
<dbReference type="EMBL" id="CP000038">
    <property type="protein sequence ID" value="AAZ90540.1"/>
    <property type="molecule type" value="Genomic_DNA"/>
</dbReference>
<dbReference type="RefSeq" id="WP_000438762.1">
    <property type="nucleotide sequence ID" value="NC_007384.1"/>
</dbReference>
<dbReference type="SMR" id="Q3YVC2"/>
<dbReference type="KEGG" id="ssn:SSON_4018"/>
<dbReference type="HOGENOM" id="CLU_031026_2_3_6"/>
<dbReference type="UniPathway" id="UPA00659"/>
<dbReference type="Proteomes" id="UP000002529">
    <property type="component" value="Chromosome"/>
</dbReference>
<dbReference type="GO" id="GO:0005737">
    <property type="term" value="C:cytoplasm"/>
    <property type="evidence" value="ECO:0007669"/>
    <property type="project" value="UniProtKB-SubCell"/>
</dbReference>
<dbReference type="GO" id="GO:0003988">
    <property type="term" value="F:acetyl-CoA C-acyltransferase activity"/>
    <property type="evidence" value="ECO:0007669"/>
    <property type="project" value="UniProtKB-UniRule"/>
</dbReference>
<dbReference type="GO" id="GO:0006635">
    <property type="term" value="P:fatty acid beta-oxidation"/>
    <property type="evidence" value="ECO:0007669"/>
    <property type="project" value="UniProtKB-UniRule"/>
</dbReference>
<dbReference type="GO" id="GO:0010124">
    <property type="term" value="P:phenylacetate catabolic process"/>
    <property type="evidence" value="ECO:0007669"/>
    <property type="project" value="TreeGrafter"/>
</dbReference>
<dbReference type="CDD" id="cd00751">
    <property type="entry name" value="thiolase"/>
    <property type="match status" value="1"/>
</dbReference>
<dbReference type="FunFam" id="3.40.47.10:FF:000010">
    <property type="entry name" value="Acetyl-CoA acetyltransferase (Thiolase)"/>
    <property type="match status" value="1"/>
</dbReference>
<dbReference type="Gene3D" id="3.40.47.10">
    <property type="match status" value="2"/>
</dbReference>
<dbReference type="HAMAP" id="MF_01620">
    <property type="entry name" value="FadA"/>
    <property type="match status" value="1"/>
</dbReference>
<dbReference type="InterPro" id="IPR012805">
    <property type="entry name" value="FadA"/>
</dbReference>
<dbReference type="InterPro" id="IPR002155">
    <property type="entry name" value="Thiolase"/>
</dbReference>
<dbReference type="InterPro" id="IPR016039">
    <property type="entry name" value="Thiolase-like"/>
</dbReference>
<dbReference type="InterPro" id="IPR050215">
    <property type="entry name" value="Thiolase-like_sf_Thiolase"/>
</dbReference>
<dbReference type="InterPro" id="IPR020615">
    <property type="entry name" value="Thiolase_acyl_enz_int_AS"/>
</dbReference>
<dbReference type="InterPro" id="IPR020610">
    <property type="entry name" value="Thiolase_AS"/>
</dbReference>
<dbReference type="InterPro" id="IPR020617">
    <property type="entry name" value="Thiolase_C"/>
</dbReference>
<dbReference type="InterPro" id="IPR020613">
    <property type="entry name" value="Thiolase_CS"/>
</dbReference>
<dbReference type="InterPro" id="IPR020616">
    <property type="entry name" value="Thiolase_N"/>
</dbReference>
<dbReference type="NCBIfam" id="TIGR01930">
    <property type="entry name" value="AcCoA-C-Actrans"/>
    <property type="match status" value="1"/>
</dbReference>
<dbReference type="NCBIfam" id="TIGR02445">
    <property type="entry name" value="fadA"/>
    <property type="match status" value="1"/>
</dbReference>
<dbReference type="NCBIfam" id="NF006510">
    <property type="entry name" value="PRK08947.1"/>
    <property type="match status" value="1"/>
</dbReference>
<dbReference type="PANTHER" id="PTHR43853:SF11">
    <property type="entry name" value="3-KETOACYL-COA THIOLASE FADA"/>
    <property type="match status" value="1"/>
</dbReference>
<dbReference type="PANTHER" id="PTHR43853">
    <property type="entry name" value="3-KETOACYL-COA THIOLASE, PEROXISOMAL"/>
    <property type="match status" value="1"/>
</dbReference>
<dbReference type="Pfam" id="PF02803">
    <property type="entry name" value="Thiolase_C"/>
    <property type="match status" value="1"/>
</dbReference>
<dbReference type="Pfam" id="PF00108">
    <property type="entry name" value="Thiolase_N"/>
    <property type="match status" value="1"/>
</dbReference>
<dbReference type="PIRSF" id="PIRSF000429">
    <property type="entry name" value="Ac-CoA_Ac_transf"/>
    <property type="match status" value="1"/>
</dbReference>
<dbReference type="SUPFAM" id="SSF53901">
    <property type="entry name" value="Thiolase-like"/>
    <property type="match status" value="2"/>
</dbReference>
<dbReference type="PROSITE" id="PS00098">
    <property type="entry name" value="THIOLASE_1"/>
    <property type="match status" value="1"/>
</dbReference>
<dbReference type="PROSITE" id="PS00737">
    <property type="entry name" value="THIOLASE_2"/>
    <property type="match status" value="1"/>
</dbReference>
<dbReference type="PROSITE" id="PS00099">
    <property type="entry name" value="THIOLASE_3"/>
    <property type="match status" value="1"/>
</dbReference>
<sequence length="387" mass="40777">MEQVVIVDAIRTPMGRSKGGAFRNVRAEDLSAHLMRSLLARNPALEAAALDDIYWGCVQQTLEQGFNIARNAALLAEVPHSVPAVTVNRLCGSSMQALHDAARMIMTGDAQAGLVGGVEHMGHVPMSHGVDFHPGLSRNVAKAAGMMGLTAEMLARMHGISREMQDAFAARSHARAWAATQSGAFKNEIIPTGGHDADGVLKQFNYDEVIRPETTVEALATLRPAFDPVSGTVTAGTSSALSDGAAAMLVMSESRARELGLKPRARVRSMAVVGCDPSIMGYGPVPASKLALKKAGLSASDIGVFEMNEAFAAQILPCIKDLGLMEQIDEKINLNGGAIALGHPLGCSGARISTTLLNLMEHKDVQFGLATMCIGLGQGIATVFERV</sequence>
<keyword id="KW-0012">Acyltransferase</keyword>
<keyword id="KW-0963">Cytoplasm</keyword>
<keyword id="KW-0276">Fatty acid metabolism</keyword>
<keyword id="KW-0442">Lipid degradation</keyword>
<keyword id="KW-0443">Lipid metabolism</keyword>
<keyword id="KW-1185">Reference proteome</keyword>
<keyword id="KW-0808">Transferase</keyword>
<feature type="chain" id="PRO_0000206394" description="3-ketoacyl-CoA thiolase">
    <location>
        <begin position="1"/>
        <end position="387"/>
    </location>
</feature>
<feature type="active site" description="Acyl-thioester intermediate" evidence="1">
    <location>
        <position position="91"/>
    </location>
</feature>
<feature type="active site" description="Proton acceptor" evidence="1">
    <location>
        <position position="343"/>
    </location>
</feature>
<feature type="active site" description="Proton acceptor" evidence="1">
    <location>
        <position position="373"/>
    </location>
</feature>
<reference key="1">
    <citation type="journal article" date="2005" name="Nucleic Acids Res.">
        <title>Genome dynamics and diversity of Shigella species, the etiologic agents of bacillary dysentery.</title>
        <authorList>
            <person name="Yang F."/>
            <person name="Yang J."/>
            <person name="Zhang X."/>
            <person name="Chen L."/>
            <person name="Jiang Y."/>
            <person name="Yan Y."/>
            <person name="Tang X."/>
            <person name="Wang J."/>
            <person name="Xiong Z."/>
            <person name="Dong J."/>
            <person name="Xue Y."/>
            <person name="Zhu Y."/>
            <person name="Xu X."/>
            <person name="Sun L."/>
            <person name="Chen S."/>
            <person name="Nie H."/>
            <person name="Peng J."/>
            <person name="Xu J."/>
            <person name="Wang Y."/>
            <person name="Yuan Z."/>
            <person name="Wen Y."/>
            <person name="Yao Z."/>
            <person name="Shen Y."/>
            <person name="Qiang B."/>
            <person name="Hou Y."/>
            <person name="Yu J."/>
            <person name="Jin Q."/>
        </authorList>
    </citation>
    <scope>NUCLEOTIDE SEQUENCE [LARGE SCALE GENOMIC DNA]</scope>
    <source>
        <strain>Ss046</strain>
    </source>
</reference>